<sequence length="394" mass="43314">MSKEKFERTKPHVNVGTIGHVDHGKTTLTAAITTVLAKTYGGAARAFDQIDNAPEEKARGITINTSHVEYDTPTRHYAHVDCPGHADYVKNMITGAAQMDGAILVVAATDGPMPQTREHILLGRQVGVPYIIVFLNKCDMVDDEELLELVEMEVRELLSQYDFPGDDTPIVRGSALKALEGDAEWEAKILELAGFLDSYIPEPERAIDKPFLLPIEDVFSISGRGTVVTGRVERGIIKVGEEVEIVGIKETQKSTCTGVEMFRKLLDEGRAGENVGVLLRGIKREEIERGQVLAKPGTIKPHTKFESEVYILSKDEGGRHTPFFKGYRPQFYFRTTDVTGTIELPEGVEMVMPGDNIKMVVTLIHPIAMDDGLRFAIREGGRTVGAGVVAKVLS</sequence>
<reference key="1">
    <citation type="journal article" date="2008" name="J. Bacteriol.">
        <title>The pangenome structure of Escherichia coli: comparative genomic analysis of E. coli commensal and pathogenic isolates.</title>
        <authorList>
            <person name="Rasko D.A."/>
            <person name="Rosovitz M.J."/>
            <person name="Myers G.S.A."/>
            <person name="Mongodin E.F."/>
            <person name="Fricke W.F."/>
            <person name="Gajer P."/>
            <person name="Crabtree J."/>
            <person name="Sebaihia M."/>
            <person name="Thomson N.R."/>
            <person name="Chaudhuri R."/>
            <person name="Henderson I.R."/>
            <person name="Sperandio V."/>
            <person name="Ravel J."/>
        </authorList>
    </citation>
    <scope>NUCLEOTIDE SEQUENCE [LARGE SCALE GENOMIC DNA]</scope>
    <source>
        <strain>HS</strain>
    </source>
</reference>
<proteinExistence type="inferred from homology"/>
<keyword id="KW-0963">Cytoplasm</keyword>
<keyword id="KW-0251">Elongation factor</keyword>
<keyword id="KW-0342">GTP-binding</keyword>
<keyword id="KW-0378">Hydrolase</keyword>
<keyword id="KW-0460">Magnesium</keyword>
<keyword id="KW-0479">Metal-binding</keyword>
<keyword id="KW-0547">Nucleotide-binding</keyword>
<keyword id="KW-0648">Protein biosynthesis</keyword>
<name>EFTU2_ECOHS</name>
<evidence type="ECO:0000250" key="1"/>
<evidence type="ECO:0000255" key="2">
    <source>
        <dbReference type="HAMAP-Rule" id="MF_00118"/>
    </source>
</evidence>
<feature type="chain" id="PRO_0000337393" description="Elongation factor Tu 2">
    <location>
        <begin position="1"/>
        <end position="394"/>
    </location>
</feature>
<feature type="domain" description="tr-type G">
    <location>
        <begin position="10"/>
        <end position="204"/>
    </location>
</feature>
<feature type="region of interest" description="G1" evidence="1">
    <location>
        <begin position="19"/>
        <end position="26"/>
    </location>
</feature>
<feature type="region of interest" description="G2" evidence="1">
    <location>
        <begin position="60"/>
        <end position="64"/>
    </location>
</feature>
<feature type="region of interest" description="G3" evidence="1">
    <location>
        <begin position="81"/>
        <end position="84"/>
    </location>
</feature>
<feature type="region of interest" description="G4" evidence="1">
    <location>
        <begin position="136"/>
        <end position="139"/>
    </location>
</feature>
<feature type="region of interest" description="G5" evidence="1">
    <location>
        <begin position="174"/>
        <end position="176"/>
    </location>
</feature>
<feature type="binding site" evidence="2">
    <location>
        <begin position="19"/>
        <end position="26"/>
    </location>
    <ligand>
        <name>GTP</name>
        <dbReference type="ChEBI" id="CHEBI:37565"/>
    </ligand>
</feature>
<feature type="binding site" evidence="2">
    <location>
        <position position="26"/>
    </location>
    <ligand>
        <name>Mg(2+)</name>
        <dbReference type="ChEBI" id="CHEBI:18420"/>
    </ligand>
</feature>
<feature type="binding site" evidence="2">
    <location>
        <begin position="81"/>
        <end position="85"/>
    </location>
    <ligand>
        <name>GTP</name>
        <dbReference type="ChEBI" id="CHEBI:37565"/>
    </ligand>
</feature>
<feature type="binding site" evidence="2">
    <location>
        <begin position="136"/>
        <end position="139"/>
    </location>
    <ligand>
        <name>GTP</name>
        <dbReference type="ChEBI" id="CHEBI:37565"/>
    </ligand>
</feature>
<gene>
    <name evidence="2" type="primary">tuf2</name>
    <name type="ordered locus">EcHS_A4213</name>
</gene>
<accession>A8A779</accession>
<protein>
    <recommendedName>
        <fullName evidence="2">Elongation factor Tu 2</fullName>
        <shortName evidence="2">EF-Tu 2</shortName>
        <ecNumber evidence="2">3.6.5.3</ecNumber>
    </recommendedName>
</protein>
<comment type="function">
    <text evidence="2">GTP hydrolase that promotes the GTP-dependent binding of aminoacyl-tRNA to the A-site of ribosomes during protein biosynthesis.</text>
</comment>
<comment type="catalytic activity">
    <reaction evidence="2">
        <text>GTP + H2O = GDP + phosphate + H(+)</text>
        <dbReference type="Rhea" id="RHEA:19669"/>
        <dbReference type="ChEBI" id="CHEBI:15377"/>
        <dbReference type="ChEBI" id="CHEBI:15378"/>
        <dbReference type="ChEBI" id="CHEBI:37565"/>
        <dbReference type="ChEBI" id="CHEBI:43474"/>
        <dbReference type="ChEBI" id="CHEBI:58189"/>
        <dbReference type="EC" id="3.6.5.3"/>
    </reaction>
    <physiologicalReaction direction="left-to-right" evidence="2">
        <dbReference type="Rhea" id="RHEA:19670"/>
    </physiologicalReaction>
</comment>
<comment type="subunit">
    <text evidence="2">Monomer.</text>
</comment>
<comment type="subcellular location">
    <subcellularLocation>
        <location evidence="2">Cytoplasm</location>
    </subcellularLocation>
</comment>
<comment type="similarity">
    <text evidence="2">Belongs to the TRAFAC class translation factor GTPase superfamily. Classic translation factor GTPase family. EF-Tu/EF-1A subfamily.</text>
</comment>
<organism>
    <name type="scientific">Escherichia coli O9:H4 (strain HS)</name>
    <dbReference type="NCBI Taxonomy" id="331112"/>
    <lineage>
        <taxon>Bacteria</taxon>
        <taxon>Pseudomonadati</taxon>
        <taxon>Pseudomonadota</taxon>
        <taxon>Gammaproteobacteria</taxon>
        <taxon>Enterobacterales</taxon>
        <taxon>Enterobacteriaceae</taxon>
        <taxon>Escherichia</taxon>
    </lineage>
</organism>
<dbReference type="EC" id="3.6.5.3" evidence="2"/>
<dbReference type="EMBL" id="CP000802">
    <property type="protein sequence ID" value="ABV08383.1"/>
    <property type="molecule type" value="Genomic_DNA"/>
</dbReference>
<dbReference type="SMR" id="A8A779"/>
<dbReference type="KEGG" id="ecx:EcHS_A4213"/>
<dbReference type="HOGENOM" id="CLU_007265_0_2_6"/>
<dbReference type="GO" id="GO:0005829">
    <property type="term" value="C:cytosol"/>
    <property type="evidence" value="ECO:0007669"/>
    <property type="project" value="TreeGrafter"/>
</dbReference>
<dbReference type="GO" id="GO:0005525">
    <property type="term" value="F:GTP binding"/>
    <property type="evidence" value="ECO:0007669"/>
    <property type="project" value="UniProtKB-UniRule"/>
</dbReference>
<dbReference type="GO" id="GO:0003924">
    <property type="term" value="F:GTPase activity"/>
    <property type="evidence" value="ECO:0007669"/>
    <property type="project" value="InterPro"/>
</dbReference>
<dbReference type="GO" id="GO:0097216">
    <property type="term" value="F:guanosine tetraphosphate binding"/>
    <property type="evidence" value="ECO:0007669"/>
    <property type="project" value="UniProtKB-ARBA"/>
</dbReference>
<dbReference type="GO" id="GO:0003746">
    <property type="term" value="F:translation elongation factor activity"/>
    <property type="evidence" value="ECO:0007669"/>
    <property type="project" value="UniProtKB-UniRule"/>
</dbReference>
<dbReference type="CDD" id="cd01884">
    <property type="entry name" value="EF_Tu"/>
    <property type="match status" value="1"/>
</dbReference>
<dbReference type="CDD" id="cd03697">
    <property type="entry name" value="EFTU_II"/>
    <property type="match status" value="1"/>
</dbReference>
<dbReference type="CDD" id="cd03707">
    <property type="entry name" value="EFTU_III"/>
    <property type="match status" value="1"/>
</dbReference>
<dbReference type="FunFam" id="2.40.30.10:FF:000001">
    <property type="entry name" value="Elongation factor Tu"/>
    <property type="match status" value="1"/>
</dbReference>
<dbReference type="FunFam" id="3.40.50.300:FF:000003">
    <property type="entry name" value="Elongation factor Tu"/>
    <property type="match status" value="1"/>
</dbReference>
<dbReference type="Gene3D" id="3.40.50.300">
    <property type="entry name" value="P-loop containing nucleotide triphosphate hydrolases"/>
    <property type="match status" value="1"/>
</dbReference>
<dbReference type="Gene3D" id="2.40.30.10">
    <property type="entry name" value="Translation factors"/>
    <property type="match status" value="2"/>
</dbReference>
<dbReference type="HAMAP" id="MF_00118_B">
    <property type="entry name" value="EF_Tu_B"/>
    <property type="match status" value="1"/>
</dbReference>
<dbReference type="InterPro" id="IPR041709">
    <property type="entry name" value="EF-Tu_GTP-bd"/>
</dbReference>
<dbReference type="InterPro" id="IPR050055">
    <property type="entry name" value="EF-Tu_GTPase"/>
</dbReference>
<dbReference type="InterPro" id="IPR004161">
    <property type="entry name" value="EFTu-like_2"/>
</dbReference>
<dbReference type="InterPro" id="IPR033720">
    <property type="entry name" value="EFTU_2"/>
</dbReference>
<dbReference type="InterPro" id="IPR031157">
    <property type="entry name" value="G_TR_CS"/>
</dbReference>
<dbReference type="InterPro" id="IPR027417">
    <property type="entry name" value="P-loop_NTPase"/>
</dbReference>
<dbReference type="InterPro" id="IPR005225">
    <property type="entry name" value="Small_GTP-bd"/>
</dbReference>
<dbReference type="InterPro" id="IPR000795">
    <property type="entry name" value="T_Tr_GTP-bd_dom"/>
</dbReference>
<dbReference type="InterPro" id="IPR009000">
    <property type="entry name" value="Transl_B-barrel_sf"/>
</dbReference>
<dbReference type="InterPro" id="IPR009001">
    <property type="entry name" value="Transl_elong_EF1A/Init_IF2_C"/>
</dbReference>
<dbReference type="InterPro" id="IPR004541">
    <property type="entry name" value="Transl_elong_EFTu/EF1A_bac/org"/>
</dbReference>
<dbReference type="InterPro" id="IPR004160">
    <property type="entry name" value="Transl_elong_EFTu/EF1A_C"/>
</dbReference>
<dbReference type="NCBIfam" id="TIGR00485">
    <property type="entry name" value="EF-Tu"/>
    <property type="match status" value="1"/>
</dbReference>
<dbReference type="NCBIfam" id="NF000766">
    <property type="entry name" value="PRK00049.1"/>
    <property type="match status" value="1"/>
</dbReference>
<dbReference type="NCBIfam" id="NF009372">
    <property type="entry name" value="PRK12735.1"/>
    <property type="match status" value="1"/>
</dbReference>
<dbReference type="NCBIfam" id="NF009373">
    <property type="entry name" value="PRK12736.1"/>
    <property type="match status" value="1"/>
</dbReference>
<dbReference type="NCBIfam" id="TIGR00231">
    <property type="entry name" value="small_GTP"/>
    <property type="match status" value="1"/>
</dbReference>
<dbReference type="PANTHER" id="PTHR43721:SF22">
    <property type="entry name" value="ELONGATION FACTOR TU, MITOCHONDRIAL"/>
    <property type="match status" value="1"/>
</dbReference>
<dbReference type="PANTHER" id="PTHR43721">
    <property type="entry name" value="ELONGATION FACTOR TU-RELATED"/>
    <property type="match status" value="1"/>
</dbReference>
<dbReference type="Pfam" id="PF00009">
    <property type="entry name" value="GTP_EFTU"/>
    <property type="match status" value="1"/>
</dbReference>
<dbReference type="Pfam" id="PF03144">
    <property type="entry name" value="GTP_EFTU_D2"/>
    <property type="match status" value="1"/>
</dbReference>
<dbReference type="Pfam" id="PF03143">
    <property type="entry name" value="GTP_EFTU_D3"/>
    <property type="match status" value="1"/>
</dbReference>
<dbReference type="PRINTS" id="PR00315">
    <property type="entry name" value="ELONGATNFCT"/>
</dbReference>
<dbReference type="SUPFAM" id="SSF50465">
    <property type="entry name" value="EF-Tu/eEF-1alpha/eIF2-gamma C-terminal domain"/>
    <property type="match status" value="1"/>
</dbReference>
<dbReference type="SUPFAM" id="SSF52540">
    <property type="entry name" value="P-loop containing nucleoside triphosphate hydrolases"/>
    <property type="match status" value="1"/>
</dbReference>
<dbReference type="SUPFAM" id="SSF50447">
    <property type="entry name" value="Translation proteins"/>
    <property type="match status" value="1"/>
</dbReference>
<dbReference type="PROSITE" id="PS00301">
    <property type="entry name" value="G_TR_1"/>
    <property type="match status" value="1"/>
</dbReference>
<dbReference type="PROSITE" id="PS51722">
    <property type="entry name" value="G_TR_2"/>
    <property type="match status" value="1"/>
</dbReference>